<proteinExistence type="evidence at protein level"/>
<protein>
    <recommendedName>
        <fullName>Nucleoprotein</fullName>
    </recommendedName>
    <alternativeName>
        <fullName>Coat protein</fullName>
        <shortName>CP</shortName>
    </alternativeName>
    <alternativeName>
        <fullName>Nucleocapsid protein</fullName>
        <shortName>Protein N</shortName>
    </alternativeName>
    <alternativeName>
        <fullName>Protein pc3</fullName>
    </alternativeName>
</protein>
<feature type="chain" id="PRO_0000222522" description="Nucleoprotein">
    <location>
        <begin position="1"/>
        <end position="322"/>
    </location>
</feature>
<feature type="binding site" evidence="1">
    <location>
        <position position="43"/>
    </location>
    <ligand>
        <name>RNA</name>
        <dbReference type="ChEBI" id="CHEBI:33697"/>
    </ligand>
</feature>
<feature type="binding site" evidence="1">
    <location>
        <position position="46"/>
    </location>
    <ligand>
        <name>RNA</name>
        <dbReference type="ChEBI" id="CHEBI:33697"/>
    </ligand>
</feature>
<feature type="binding site" evidence="1">
    <location>
        <position position="76"/>
    </location>
    <ligand>
        <name>RNA</name>
        <dbReference type="ChEBI" id="CHEBI:33697"/>
    </ligand>
</feature>
<feature type="binding site" evidence="1">
    <location>
        <position position="122"/>
    </location>
    <ligand>
        <name>RNA</name>
        <dbReference type="ChEBI" id="CHEBI:33697"/>
    </ligand>
</feature>
<feature type="binding site" evidence="1">
    <location>
        <position position="240"/>
    </location>
    <ligand>
        <name>RNA</name>
        <dbReference type="ChEBI" id="CHEBI:33697"/>
    </ligand>
</feature>
<feature type="binding site" evidence="1">
    <location>
        <position position="269"/>
    </location>
    <ligand>
        <name>RNA</name>
        <dbReference type="ChEBI" id="CHEBI:33697"/>
    </ligand>
</feature>
<comment type="function">
    <text>Encapsidates the genome, protecting it from nucleases. The encapsidated genomic RNA is termed the nucleocapsid (NC), and serves as template for viral transcription and replication.</text>
</comment>
<comment type="subcellular location">
    <subcellularLocation>
        <location evidence="2">Virion</location>
    </subcellularLocation>
    <subcellularLocation>
        <location evidence="2">Host cytoplasm</location>
    </subcellularLocation>
</comment>
<comment type="domain">
    <text evidence="1">The N-terminus is involved in homooligomerization.</text>
</comment>
<comment type="similarity">
    <text evidence="3">Belongs to the tenuiviruses nucleocapsid protein family.</text>
</comment>
<organismHost>
    <name type="scientific">Avena sativa</name>
    <name type="common">Oat</name>
    <dbReference type="NCBI Taxonomy" id="4498"/>
</organismHost>
<organismHost>
    <name type="scientific">Digitaria</name>
    <dbReference type="NCBI Taxonomy" id="66017"/>
</organismHost>
<organismHost>
    <name type="scientific">Eragrostis</name>
    <dbReference type="NCBI Taxonomy" id="38413"/>
</organismHost>
<organismHost>
    <name type="scientific">Hordeum vulgare</name>
    <name type="common">Barley</name>
    <dbReference type="NCBI Taxonomy" id="4513"/>
</organismHost>
<organismHost>
    <name type="scientific">Oryza sativa</name>
    <name type="common">Rice</name>
    <dbReference type="NCBI Taxonomy" id="4530"/>
</organismHost>
<organismHost>
    <name type="scientific">Setaria italica</name>
    <name type="common">Foxtail millet</name>
    <name type="synonym">Panicum italicum</name>
    <dbReference type="NCBI Taxonomy" id="4555"/>
</organismHost>
<organismHost>
    <name type="scientific">Setaria viridis</name>
    <name type="common">Green bristlegrass</name>
    <name type="synonym">Setaria italica subsp. viridis</name>
    <dbReference type="NCBI Taxonomy" id="4556"/>
</organismHost>
<organismHost>
    <name type="scientific">Triticum aestivum</name>
    <name type="common">Wheat</name>
    <dbReference type="NCBI Taxonomy" id="4565"/>
</organismHost>
<organismHost>
    <name type="scientific">Zea mays</name>
    <name type="common">Maize</name>
    <dbReference type="NCBI Taxonomy" id="4577"/>
</organismHost>
<accession>P68559</accession>
<accession>P26657</accession>
<sequence length="322" mass="35134">MGTNKPATLADLQKAINDISKDALSYLTAHKADVVTFAGQIEYAGYDAATLIGILKDKGGDTLAKDMTMCITMRYVRGTGFVRDVTKKVKVAAGSTEASTLVSRYGIVSSVGTNANAITLGRLAQLFPNVSHEVVRQISGVKMAVDSSDLGLTGCDNLLWDYVPQYIKLESETAPYCSTHSLSHILFVVHIIHSFQITKKTMPEGKKKERGLTKDIDMMKYTTGLLVITCKSKNLSDKKKEEGRKKVLDEFITNGKVKTTIFDALAGMSVNTISTYGNQTRLYLAQQSKLMKILAENTSKTATEVSGLVKEFFEDEAEGADD</sequence>
<name>NCAP_RSVT</name>
<reference key="1">
    <citation type="journal article" date="1991" name="J. Gen. Virol.">
        <title>Complete nucleotide sequence of RNA 3 of rice stripe virus: an ambisense coding strategy.</title>
        <authorList>
            <person name="Zhu Y."/>
            <person name="Hayakawa T."/>
            <person name="Toriyama S."/>
            <person name="Takahashi M."/>
        </authorList>
    </citation>
    <scope>NUCLEOTIDE SEQUENCE [GENOMIC RNA]</scope>
    <scope>PROTEIN SEQUENCE OF 143-156 AND 221-228</scope>
</reference>
<reference key="2">
    <citation type="journal article" date="2005" name="Virus Genes">
        <title>Detection and localization of Rice stripe virus gene products in vivo.</title>
        <authorList>
            <person name="Liang D."/>
            <person name="Qu Z."/>
            <person name="Ma X."/>
            <person name="Hull R."/>
        </authorList>
    </citation>
    <scope>SUBCELLULAR LOCATION</scope>
</reference>
<reference key="3">
    <citation type="journal article" date="2005" name="Virus Genes">
        <title>Nucleic acid binding property of the gene products of rice stripe virus.</title>
        <authorList>
            <person name="Liang D."/>
            <person name="Ma X."/>
            <person name="Qu Z."/>
            <person name="Hull R."/>
        </authorList>
    </citation>
    <scope>RNA-BINDING</scope>
</reference>
<evidence type="ECO:0000250" key="1">
    <source>
        <dbReference type="UniProtKB" id="P21701"/>
    </source>
</evidence>
<evidence type="ECO:0000269" key="2">
    <source>
    </source>
</evidence>
<evidence type="ECO:0000305" key="3"/>
<keyword id="KW-0167">Capsid protein</keyword>
<keyword id="KW-0903">Direct protein sequencing</keyword>
<keyword id="KW-1139">Helical capsid protein</keyword>
<keyword id="KW-1035">Host cytoplasm</keyword>
<keyword id="KW-1185">Reference proteome</keyword>
<keyword id="KW-0694">RNA-binding</keyword>
<keyword id="KW-0543">Viral nucleoprotein</keyword>
<keyword id="KW-0946">Virion</keyword>
<dbReference type="EMBL" id="X53563">
    <property type="protein sequence ID" value="CAA37635.1"/>
    <property type="molecule type" value="Genomic_RNA"/>
</dbReference>
<dbReference type="SMR" id="P68559"/>
<dbReference type="KEGG" id="vg:962687"/>
<dbReference type="Proteomes" id="UP000006677">
    <property type="component" value="Genome"/>
</dbReference>
<dbReference type="GO" id="GO:0019029">
    <property type="term" value="C:helical viral capsid"/>
    <property type="evidence" value="ECO:0007669"/>
    <property type="project" value="UniProtKB-KW"/>
</dbReference>
<dbReference type="GO" id="GO:0030430">
    <property type="term" value="C:host cell cytoplasm"/>
    <property type="evidence" value="ECO:0007669"/>
    <property type="project" value="UniProtKB-SubCell"/>
</dbReference>
<dbReference type="GO" id="GO:0019013">
    <property type="term" value="C:viral nucleocapsid"/>
    <property type="evidence" value="ECO:0007669"/>
    <property type="project" value="UniProtKB-KW"/>
</dbReference>
<dbReference type="GO" id="GO:0003723">
    <property type="term" value="F:RNA binding"/>
    <property type="evidence" value="ECO:0007669"/>
    <property type="project" value="UniProtKB-KW"/>
</dbReference>
<dbReference type="InterPro" id="IPR009522">
    <property type="entry name" value="Capsid_Phlebovir/Tenuivir"/>
</dbReference>
<dbReference type="InterPro" id="IPR008864">
    <property type="entry name" value="Nucleocapsid_Tenuivirus"/>
</dbReference>
<dbReference type="Pfam" id="PF05733">
    <property type="entry name" value="Tenui_N"/>
    <property type="match status" value="1"/>
</dbReference>
<dbReference type="PIRSF" id="PIRSF004108">
    <property type="entry name" value="Tenuivirus_N"/>
    <property type="match status" value="1"/>
</dbReference>
<gene>
    <name type="ORF">pc3</name>
</gene>
<organism>
    <name type="scientific">Rice stripe virus (isolate T)</name>
    <name type="common">RSV</name>
    <dbReference type="NCBI Taxonomy" id="36394"/>
    <lineage>
        <taxon>Viruses</taxon>
        <taxon>Riboviria</taxon>
        <taxon>Orthornavirae</taxon>
        <taxon>Negarnaviricota</taxon>
        <taxon>Polyploviricotina</taxon>
        <taxon>Ellioviricetes</taxon>
        <taxon>Bunyavirales</taxon>
        <taxon>Phenuiviridae</taxon>
        <taxon>Tenuivirus</taxon>
        <taxon>Tenuivirus oryzaclavatae</taxon>
    </lineage>
</organism>